<sequence length="47" mass="5478">MKSIDLTILSLKRKGIRTEKVLKNQNPDRLSHMTDKNAQPKSKEKEE</sequence>
<proteinExistence type="predicted"/>
<dbReference type="EMBL" id="AL009126">
    <property type="protein sequence ID" value="CAX52559.1"/>
    <property type="molecule type" value="Genomic_DNA"/>
</dbReference>
<dbReference type="RefSeq" id="WP_003243880.1">
    <property type="nucleotide sequence ID" value="NZ_OZ025638.1"/>
</dbReference>
<dbReference type="RefSeq" id="YP_003097686.1">
    <property type="nucleotide sequence ID" value="NC_000964.3"/>
</dbReference>
<dbReference type="SMR" id="C0H3W1"/>
<dbReference type="FunCoup" id="C0H3W1">
    <property type="interactions" value="1"/>
</dbReference>
<dbReference type="STRING" id="224308.BSU05409"/>
<dbReference type="PaxDb" id="224308-BSU05409"/>
<dbReference type="EnsemblBacteria" id="CAX52559">
    <property type="protein sequence ID" value="CAX52559"/>
    <property type="gene ID" value="BSU_05409"/>
</dbReference>
<dbReference type="GeneID" id="8303032"/>
<dbReference type="KEGG" id="bsu:BSU05409"/>
<dbReference type="PATRIC" id="fig|224308.179.peg.579"/>
<dbReference type="InParanoid" id="C0H3W1"/>
<dbReference type="OrthoDB" id="2913653at2"/>
<dbReference type="BioCyc" id="BSUB:BSU05409-MONOMER"/>
<dbReference type="Proteomes" id="UP000001570">
    <property type="component" value="Chromosome"/>
</dbReference>
<gene>
    <name type="primary">ydzQ</name>
    <name type="ordered locus">BSU05409</name>
</gene>
<protein>
    <recommendedName>
        <fullName>Uncharacterized protein YdzQ</fullName>
    </recommendedName>
</protein>
<name>YDZQ_BACSU</name>
<feature type="chain" id="PRO_0000386658" description="Uncharacterized protein YdzQ">
    <location>
        <begin position="1"/>
        <end position="47"/>
    </location>
</feature>
<feature type="region of interest" description="Disordered" evidence="1">
    <location>
        <begin position="19"/>
        <end position="47"/>
    </location>
</feature>
<reference key="1">
    <citation type="journal article" date="1997" name="Nature">
        <title>The complete genome sequence of the Gram-positive bacterium Bacillus subtilis.</title>
        <authorList>
            <person name="Kunst F."/>
            <person name="Ogasawara N."/>
            <person name="Moszer I."/>
            <person name="Albertini A.M."/>
            <person name="Alloni G."/>
            <person name="Azevedo V."/>
            <person name="Bertero M.G."/>
            <person name="Bessieres P."/>
            <person name="Bolotin A."/>
            <person name="Borchert S."/>
            <person name="Borriss R."/>
            <person name="Boursier L."/>
            <person name="Brans A."/>
            <person name="Braun M."/>
            <person name="Brignell S.C."/>
            <person name="Bron S."/>
            <person name="Brouillet S."/>
            <person name="Bruschi C.V."/>
            <person name="Caldwell B."/>
            <person name="Capuano V."/>
            <person name="Carter N.M."/>
            <person name="Choi S.-K."/>
            <person name="Codani J.-J."/>
            <person name="Connerton I.F."/>
            <person name="Cummings N.J."/>
            <person name="Daniel R.A."/>
            <person name="Denizot F."/>
            <person name="Devine K.M."/>
            <person name="Duesterhoeft A."/>
            <person name="Ehrlich S.D."/>
            <person name="Emmerson P.T."/>
            <person name="Entian K.-D."/>
            <person name="Errington J."/>
            <person name="Fabret C."/>
            <person name="Ferrari E."/>
            <person name="Foulger D."/>
            <person name="Fritz C."/>
            <person name="Fujita M."/>
            <person name="Fujita Y."/>
            <person name="Fuma S."/>
            <person name="Galizzi A."/>
            <person name="Galleron N."/>
            <person name="Ghim S.-Y."/>
            <person name="Glaser P."/>
            <person name="Goffeau A."/>
            <person name="Golightly E.J."/>
            <person name="Grandi G."/>
            <person name="Guiseppi G."/>
            <person name="Guy B.J."/>
            <person name="Haga K."/>
            <person name="Haiech J."/>
            <person name="Harwood C.R."/>
            <person name="Henaut A."/>
            <person name="Hilbert H."/>
            <person name="Holsappel S."/>
            <person name="Hosono S."/>
            <person name="Hullo M.-F."/>
            <person name="Itaya M."/>
            <person name="Jones L.-M."/>
            <person name="Joris B."/>
            <person name="Karamata D."/>
            <person name="Kasahara Y."/>
            <person name="Klaerr-Blanchard M."/>
            <person name="Klein C."/>
            <person name="Kobayashi Y."/>
            <person name="Koetter P."/>
            <person name="Koningstein G."/>
            <person name="Krogh S."/>
            <person name="Kumano M."/>
            <person name="Kurita K."/>
            <person name="Lapidus A."/>
            <person name="Lardinois S."/>
            <person name="Lauber J."/>
            <person name="Lazarevic V."/>
            <person name="Lee S.-M."/>
            <person name="Levine A."/>
            <person name="Liu H."/>
            <person name="Masuda S."/>
            <person name="Mauel C."/>
            <person name="Medigue C."/>
            <person name="Medina N."/>
            <person name="Mellado R.P."/>
            <person name="Mizuno M."/>
            <person name="Moestl D."/>
            <person name="Nakai S."/>
            <person name="Noback M."/>
            <person name="Noone D."/>
            <person name="O'Reilly M."/>
            <person name="Ogawa K."/>
            <person name="Ogiwara A."/>
            <person name="Oudega B."/>
            <person name="Park S.-H."/>
            <person name="Parro V."/>
            <person name="Pohl T.M."/>
            <person name="Portetelle D."/>
            <person name="Porwollik S."/>
            <person name="Prescott A.M."/>
            <person name="Presecan E."/>
            <person name="Pujic P."/>
            <person name="Purnelle B."/>
            <person name="Rapoport G."/>
            <person name="Rey M."/>
            <person name="Reynolds S."/>
            <person name="Rieger M."/>
            <person name="Rivolta C."/>
            <person name="Rocha E."/>
            <person name="Roche B."/>
            <person name="Rose M."/>
            <person name="Sadaie Y."/>
            <person name="Sato T."/>
            <person name="Scanlan E."/>
            <person name="Schleich S."/>
            <person name="Schroeter R."/>
            <person name="Scoffone F."/>
            <person name="Sekiguchi J."/>
            <person name="Sekowska A."/>
            <person name="Seror S.J."/>
            <person name="Serror P."/>
            <person name="Shin B.-S."/>
            <person name="Soldo B."/>
            <person name="Sorokin A."/>
            <person name="Tacconi E."/>
            <person name="Takagi T."/>
            <person name="Takahashi H."/>
            <person name="Takemaru K."/>
            <person name="Takeuchi M."/>
            <person name="Tamakoshi A."/>
            <person name="Tanaka T."/>
            <person name="Terpstra P."/>
            <person name="Tognoni A."/>
            <person name="Tosato V."/>
            <person name="Uchiyama S."/>
            <person name="Vandenbol M."/>
            <person name="Vannier F."/>
            <person name="Vassarotti A."/>
            <person name="Viari A."/>
            <person name="Wambutt R."/>
            <person name="Wedler E."/>
            <person name="Wedler H."/>
            <person name="Weitzenegger T."/>
            <person name="Winters P."/>
            <person name="Wipat A."/>
            <person name="Yamamoto H."/>
            <person name="Yamane K."/>
            <person name="Yasumoto K."/>
            <person name="Yata K."/>
            <person name="Yoshida K."/>
            <person name="Yoshikawa H.-F."/>
            <person name="Zumstein E."/>
            <person name="Yoshikawa H."/>
            <person name="Danchin A."/>
        </authorList>
    </citation>
    <scope>NUCLEOTIDE SEQUENCE [LARGE SCALE GENOMIC DNA]</scope>
    <source>
        <strain>168</strain>
    </source>
</reference>
<evidence type="ECO:0000256" key="1">
    <source>
        <dbReference type="SAM" id="MobiDB-lite"/>
    </source>
</evidence>
<keyword id="KW-1185">Reference proteome</keyword>
<organism>
    <name type="scientific">Bacillus subtilis (strain 168)</name>
    <dbReference type="NCBI Taxonomy" id="224308"/>
    <lineage>
        <taxon>Bacteria</taxon>
        <taxon>Bacillati</taxon>
        <taxon>Bacillota</taxon>
        <taxon>Bacilli</taxon>
        <taxon>Bacillales</taxon>
        <taxon>Bacillaceae</taxon>
        <taxon>Bacillus</taxon>
    </lineage>
</organism>
<accession>C0H3W1</accession>